<feature type="initiator methionine" description="Removed" evidence="20 21 22">
    <location>
        <position position="1"/>
    </location>
</feature>
<feature type="chain" id="PRO_0000127269" description="Protein max">
    <location>
        <begin position="2"/>
        <end position="160"/>
    </location>
</feature>
<feature type="domain" description="bHLH" evidence="2">
    <location>
        <begin position="23"/>
        <end position="74"/>
    </location>
</feature>
<feature type="region of interest" description="Disordered" evidence="3">
    <location>
        <begin position="1"/>
        <end position="40"/>
    </location>
</feature>
<feature type="region of interest" description="Leucine-zipper">
    <location>
        <begin position="81"/>
        <end position="102"/>
    </location>
</feature>
<feature type="region of interest" description="Disordered" evidence="3">
    <location>
        <begin position="103"/>
        <end position="160"/>
    </location>
</feature>
<feature type="short sequence motif" description="Nuclear localization signal">
    <location>
        <begin position="152"/>
        <end position="156"/>
    </location>
</feature>
<feature type="compositionally biased region" description="Acidic residues" evidence="3">
    <location>
        <begin position="1"/>
        <end position="13"/>
    </location>
</feature>
<feature type="compositionally biased region" description="Basic and acidic residues" evidence="3">
    <location>
        <begin position="29"/>
        <end position="40"/>
    </location>
</feature>
<feature type="compositionally biased region" description="Polar residues" evidence="3">
    <location>
        <begin position="107"/>
        <end position="132"/>
    </location>
</feature>
<feature type="modified residue" description="N-acetylserine" evidence="20 21 22">
    <location>
        <position position="2"/>
    </location>
</feature>
<feature type="modified residue" description="Phosphoserine" evidence="18 21 22">
    <location>
        <position position="2"/>
    </location>
</feature>
<feature type="modified residue" description="Phosphoserine" evidence="18 21 22">
    <location>
        <position position="11"/>
    </location>
</feature>
<feature type="modified residue" description="N6-acetyllysine" evidence="16">
    <location>
        <position position="66"/>
    </location>
</feature>
<feature type="modified residue" description="Phosphoserine" evidence="23">
    <location>
        <position position="107"/>
    </location>
</feature>
<feature type="modified residue" description="N6-acetyllysine" evidence="6">
    <location>
        <position position="153"/>
    </location>
</feature>
<feature type="modified residue" description="N6-acetyllysine" evidence="6">
    <location>
        <position position="154"/>
    </location>
</feature>
<feature type="splice variant" id="VSP_002117" description="In isoform 2." evidence="11 12 14">
    <location>
        <begin position="13"/>
        <end position="21"/>
    </location>
</feature>
<feature type="splice variant" id="VSP_043430" description="In isoform 5." evidence="12">
    <original>ASRAQILDKATEYIQYMRRKNHTHQQDIDDLKRQNALLEQQVRALEKARSSAQLQTNYPSSDNSLYTNAKGSTISAFDGGSDSSSESEPEEPQSRKKLRMEAS</original>
    <variation>LYFLFWKLCTPVLHRQSLMQKCHTFISSYQVHKKKECKI</variation>
    <location>
        <begin position="58"/>
        <end position="160"/>
    </location>
</feature>
<feature type="splice variant" id="VSP_047661" description="In isoform 6." evidence="15">
    <original>ASRAQILDKATEYIQYMRRKNHTHQQDIDDLKRQNALLEQQVRALEKARSSAQLQTNYPSSDNSLYTNAKGSTISAFDGGSDSSSESEPEEPQSRKKLRMEAS</original>
    <variation>GTKMKLTLPPVFPYEHLPFPTVFCHG</variation>
    <location>
        <begin position="58"/>
        <end position="160"/>
    </location>
</feature>
<feature type="splice variant" id="VSP_002118" description="In isoform 3." evidence="11 13">
    <original>VRALEKARSSAQLQTNYPSSDNSLYTNAKGSTISAFDGGSDSSSESEPEEPQSRKKLRMEAS</original>
    <variation>GESES</variation>
    <location>
        <begin position="99"/>
        <end position="160"/>
    </location>
</feature>
<feature type="splice variant" id="VSP_043183" description="In isoform 4." evidence="11">
    <original>VRALEKARSSAQLQTNYPSSDNSLYTNAKGSTISAFDGGSDSSSESEPEEPQSRKKLRMEAS</original>
    <variation>GEHPSSWGSWPCCAPARSGFGTWACRVRASHGVCAQ</variation>
    <location>
        <begin position="99"/>
        <end position="160"/>
    </location>
</feature>
<feature type="sequence variant" id="VAR_079347" description="In PCC; does not repress MYC transcriptional activity; dbSNP:rs201743423." evidence="8 9">
    <original>V</original>
    <variation>L</variation>
    <location>
        <position position="9"/>
    </location>
</feature>
<feature type="sequence variant" id="VAR_079348" description="In PCC; uncertain significance; does not affect MYC transcriptional activity; dbSNP:rs2139887316." evidence="7 9">
    <original>D</original>
    <variation>N</variation>
    <location>
        <position position="23"/>
    </location>
</feature>
<feature type="sequence variant" id="VAR_079349" description="In PCC; does not repress MYC transcriptional activity; dbSNP:rs2139886995." evidence="8 9">
    <original>R</original>
    <variation>W</variation>
    <location>
        <position position="25"/>
    </location>
</feature>
<feature type="sequence variant" id="VAR_079350" description="In PCC; does not repress MYC transcriptional activity." evidence="7 8 9">
    <location>
        <begin position="33"/>
        <end position="160"/>
    </location>
</feature>
<feature type="sequence variant" id="VAR_079351" description="In PCC; does not repress MYC transcriptional activity; dbSNP:rs2139885633." evidence="8 9">
    <original>R</original>
    <variation>C</variation>
    <location>
        <position position="35"/>
    </location>
</feature>
<feature type="sequence variant" id="VAR_079352" description="In PCC; uncertain significance; somatic mutation." evidence="8">
    <location>
        <begin position="47"/>
        <end position="52"/>
    </location>
</feature>
<feature type="sequence variant" id="VAR_089353" description="In PDMCS; likely pathogenic; results in increased MYC transcriptional activity; increased interaction with MYC; decreased MAX binding to its target E-box sequences; dbSNP:rs2063106020." evidence="10">
    <original>R</original>
    <variation>Q</variation>
    <location>
        <position position="60"/>
    </location>
</feature>
<feature type="sequence variant" id="VAR_079353" description="In PCC; does not repress MYC transcriptional activity; dbSNP:rs2063106124." evidence="8 9">
    <original>R</original>
    <variation>W</variation>
    <location>
        <position position="60"/>
    </location>
</feature>
<feature type="sequence variant" id="VAR_079354" description="In PCC; does not repress MYC transcriptional activity." evidence="8 9">
    <original>I</original>
    <variation>S</variation>
    <location>
        <position position="71"/>
    </location>
</feature>
<feature type="sequence variant" id="VAR_079355" description="In PCC; does not repress MYC transcriptional activity; dbSNP:rs2139754684." evidence="8 9">
    <original>M</original>
    <variation>V</variation>
    <location>
        <position position="74"/>
    </location>
</feature>
<feature type="sequence variant" id="VAR_079356" description="In PCC; uncertain significance." evidence="7 8">
    <location>
        <begin position="75"/>
        <end position="160"/>
    </location>
</feature>
<feature type="sequence variant" id="VAR_079357" description="In PCC; uncertain significance." evidence="8">
    <location>
        <begin position="82"/>
        <end position="160"/>
    </location>
</feature>
<feature type="sequence variant" id="VAR_079358" description="In PCC; does not repress MYC transcriptional activity; dbSNP:rs876659562." evidence="8 9">
    <original>R</original>
    <variation>P</variation>
    <location>
        <position position="90"/>
    </location>
</feature>
<feature type="sequence variant" id="VAR_079359" description="In PCC; does not repress MYC transcriptional activity." evidence="7 9">
    <original>L</original>
    <variation>P</variation>
    <location>
        <position position="94"/>
    </location>
</feature>
<feature type="sequence variant" id="VAR_079360" description="In PCC; does not repress MYC transcriptional activity." evidence="8 9">
    <original>L</original>
    <variation>P</variation>
    <location>
        <position position="102"/>
    </location>
</feature>
<feature type="sequence variant" id="VAR_079361" description="Does not affect MYC transcriptional activity; dbSNP:rs772912674." evidence="9">
    <original>N</original>
    <variation>T</variation>
    <location>
        <position position="114"/>
    </location>
</feature>
<feature type="sequence variant" id="VAR_079362" description="Does not affect MYC transcriptional activity; dbSNP:rs760147253." evidence="7 9">
    <original>S</original>
    <variation>L</variation>
    <location>
        <position position="142"/>
    </location>
</feature>
<feature type="mutagenesis site" description="Kept nuclear localization. Loss of nuclear localization; when associated with Q-153 and Q-154." evidence="6">
    <original>K</original>
    <variation>Q</variation>
    <location>
        <position position="66"/>
    </location>
</feature>
<feature type="mutagenesis site" description="Loss of acetylation, kept nuclear localization; when associated with R-153 and R-154." evidence="6">
    <original>K</original>
    <variation>R</variation>
    <location>
        <position position="66"/>
    </location>
</feature>
<feature type="mutagenesis site" description="Loss of nuclear localization; when associated with Q-66 and Q-154. Kept nuclear localization; when associated with Q-154." evidence="6">
    <original>K</original>
    <variation>Q</variation>
    <location>
        <position position="153"/>
    </location>
</feature>
<feature type="mutagenesis site" description="Loss of acetylation, kept nuclear localization; when associated with R-66 and R-154." evidence="6">
    <original>K</original>
    <variation>R</variation>
    <location>
        <position position="153"/>
    </location>
</feature>
<feature type="mutagenesis site" description="Loss of nuclear localization; when associated with Q-66 and Q-153. Kept nuclear localization; when associated with Q-153." evidence="6">
    <original>K</original>
    <variation>Q</variation>
    <location>
        <position position="154"/>
    </location>
</feature>
<feature type="mutagenesis site" description="Loss of acetylation, kept nuclear localization; when associated with R-66 and R-153." evidence="6">
    <original>K</original>
    <variation>R</variation>
    <location>
        <position position="154"/>
    </location>
</feature>
<feature type="helix" evidence="24">
    <location>
        <begin position="5"/>
        <end position="9"/>
    </location>
</feature>
<feature type="helix" evidence="25">
    <location>
        <begin position="27"/>
        <end position="49"/>
    </location>
</feature>
<feature type="turn" evidence="25">
    <location>
        <begin position="51"/>
        <end position="55"/>
    </location>
</feature>
<feature type="helix" evidence="25">
    <location>
        <begin position="60"/>
        <end position="100"/>
    </location>
</feature>
<feature type="initiator methionine" description="Removed" evidence="21 22">
    <location sequence="P61244-2">
        <position position="1"/>
    </location>
</feature>
<feature type="modified residue" description="N-acetylserine" evidence="21 22">
    <location sequence="P61244-2">
        <position position="2"/>
    </location>
</feature>
<feature type="modified residue" description="Phosphoserine" evidence="18 19 21 22">
    <location sequence="P61244-2">
        <position position="2"/>
    </location>
</feature>
<feature type="modified residue" description="Phosphoserine" evidence="21">
    <location sequence="P61244-2">
        <position position="11"/>
    </location>
</feature>
<organism>
    <name type="scientific">Homo sapiens</name>
    <name type="common">Human</name>
    <dbReference type="NCBI Taxonomy" id="9606"/>
    <lineage>
        <taxon>Eukaryota</taxon>
        <taxon>Metazoa</taxon>
        <taxon>Chordata</taxon>
        <taxon>Craniata</taxon>
        <taxon>Vertebrata</taxon>
        <taxon>Euteleostomi</taxon>
        <taxon>Mammalia</taxon>
        <taxon>Eutheria</taxon>
        <taxon>Euarchontoglires</taxon>
        <taxon>Primates</taxon>
        <taxon>Haplorrhini</taxon>
        <taxon>Catarrhini</taxon>
        <taxon>Hominidae</taxon>
        <taxon>Homo</taxon>
    </lineage>
</organism>
<comment type="function">
    <text evidence="9">Transcription regulator. Forms a sequence-specific DNA-binding protein complex with MYC or MAD which recognizes the core sequence 5'-CAC[GA]TG-3'. The MYC:MAX complex is a transcriptional activator, whereas the MAD:MAX complex is a repressor. May repress transcription via the recruitment of a chromatin remodeling complex containing H3 'Lys-9' histone methyltransferase activity. Represses MYC transcriptional activity from E-box elements.</text>
</comment>
<comment type="subunit">
    <text evidence="4 5">Efficient DNA binding requires dimerization with another bHLH protein. Binds DNA as a heterodimer with MYC or MAD. Part of the E2F6.com-1 complex in G0 phase composed of E2F6, MGA, MAX, TFDP1, CBX3, BAT8, EUHMTASE1, RING1, RNF2, MBLR, L3MBTL2 and YAF2. Component of some MLL1/MLL complex, at least composed of the core components KMT2A/MLL1, ASH2L, HCFC1/HCF1, WDR5 and RBBP5, as well as the facultative components BACC1, CHD8, E2F6, HSP70, INO80C, KANSL1, LAS1L, MAX, MCRS1, MGA, MYST1/MOF, PELP1, PHF20, PRP31, RING2, RUVB1/TIP49A, RUVB2/TIP49B, SENP3, TAF1, TAF4, TAF6, TAF7, TAF9 and TEX10. Interacts with SPAG9. The heterodimer MYC:MAX interacts with ABI1; the interaction may enhance MYC:MAX transcriptional activity.</text>
</comment>
<comment type="interaction">
    <interactant intactId="EBI-751711">
        <id>P61244</id>
    </interactant>
    <interactant intactId="EBI-744695">
        <id>Q8N9N5</id>
        <label>BANP</label>
    </interactant>
    <organismsDiffer>false</organismsDiffer>
    <experiments>3</experiments>
</comment>
<comment type="interaction">
    <interactant intactId="EBI-751711">
        <id>P61244</id>
    </interactant>
    <interactant intactId="EBI-749694">
        <id>O75461</id>
        <label>E2F6</label>
    </interactant>
    <organismsDiffer>false</organismsDiffer>
    <experiments>6</experiments>
</comment>
<comment type="interaction">
    <interactant intactId="EBI-751711">
        <id>P61244</id>
    </interactant>
    <interactant intactId="EBI-358607">
        <id>P29692</id>
        <label>EEF1D</label>
    </interactant>
    <organismsDiffer>false</organismsDiffer>
    <experiments>2</experiments>
</comment>
<comment type="interaction">
    <interactant intactId="EBI-751711">
        <id>P61244</id>
    </interactant>
    <interactant intactId="EBI-447470">
        <id>Q99814</id>
        <label>EPAS1</label>
    </interactant>
    <organismsDiffer>false</organismsDiffer>
    <experiments>2</experiments>
</comment>
<comment type="interaction">
    <interactant intactId="EBI-751711">
        <id>P61244</id>
    </interactant>
    <interactant intactId="EBI-2509991">
        <id>Q01167</id>
        <label>FOXK2</label>
    </interactant>
    <organismsDiffer>false</organismsDiffer>
    <experiments>4</experiments>
</comment>
<comment type="interaction">
    <interactant intactId="EBI-751711">
        <id>P61244</id>
    </interactant>
    <interactant intactId="EBI-713259">
        <id>P02794</id>
        <label>FTH1</label>
    </interactant>
    <organismsDiffer>false</organismsDiffer>
    <experiments>2</experiments>
</comment>
<comment type="interaction">
    <interactant intactId="EBI-751711">
        <id>P61244</id>
    </interactant>
    <interactant intactId="EBI-724156">
        <id>Q9UBS5</id>
        <label>GABBR1</label>
    </interactant>
    <organismsDiffer>false</organismsDiffer>
    <experiments>3</experiments>
</comment>
<comment type="interaction">
    <interactant intactId="EBI-751711">
        <id>P61244</id>
    </interactant>
    <interactant intactId="EBI-739909">
        <id>Q969R5</id>
        <label>L3MBTL2</label>
    </interactant>
    <organismsDiffer>false</organismsDiffer>
    <experiments>8</experiments>
</comment>
<comment type="interaction">
    <interactant intactId="EBI-751711">
        <id>P61244</id>
    </interactant>
    <interactant intactId="EBI-1753381">
        <id>P49916</id>
        <label>LIG3</label>
    </interactant>
    <organismsDiffer>false</organismsDiffer>
    <experiments>2</experiments>
</comment>
<comment type="interaction">
    <interactant intactId="EBI-751711">
        <id>P61244</id>
    </interactant>
    <interactant intactId="EBI-2868511">
        <id>O75367</id>
        <label>MACROH2A1</label>
    </interactant>
    <organismsDiffer>false</organismsDiffer>
    <experiments>2</experiments>
</comment>
<comment type="interaction">
    <interactant intactId="EBI-751711">
        <id>P61244</id>
    </interactant>
    <interactant intactId="EBI-751711">
        <id>P61244</id>
        <label>MAX</label>
    </interactant>
    <organismsDiffer>false</organismsDiffer>
    <experiments>4</experiments>
</comment>
<comment type="interaction">
    <interactant intactId="EBI-751711">
        <id>P61244</id>
    </interactant>
    <interactant intactId="EBI-1189067">
        <id>P51608</id>
        <label>MECP2</label>
    </interactant>
    <organismsDiffer>false</organismsDiffer>
    <experiments>2</experiments>
</comment>
<comment type="interaction">
    <interactant intactId="EBI-751711">
        <id>P61244</id>
    </interactant>
    <interactant intactId="EBI-2815196">
        <id>Q8IWI9</id>
        <label>MGA</label>
    </interactant>
    <organismsDiffer>false</organismsDiffer>
    <experiments>7</experiments>
</comment>
<comment type="interaction">
    <interactant intactId="EBI-751711">
        <id>P61244</id>
    </interactant>
    <interactant intactId="EBI-7959025">
        <id>Q99583</id>
        <label>MNT</label>
    </interactant>
    <organismsDiffer>false</organismsDiffer>
    <experiments>10</experiments>
</comment>
<comment type="interaction">
    <interactant intactId="EBI-751711">
        <id>P61244</id>
    </interactant>
    <interactant intactId="EBI-8833637">
        <id>Q05195</id>
        <label>MXD1</label>
    </interactant>
    <organismsDiffer>false</organismsDiffer>
    <experiments>4</experiments>
</comment>
<comment type="interaction">
    <interactant intactId="EBI-751711">
        <id>P61244</id>
    </interactant>
    <interactant intactId="EBI-752241">
        <id>P50539</id>
        <label>MXI1</label>
    </interactant>
    <organismsDiffer>false</organismsDiffer>
    <experiments>10</experiments>
</comment>
<comment type="interaction">
    <interactant intactId="EBI-751711">
        <id>P61244</id>
    </interactant>
    <interactant intactId="EBI-447544">
        <id>P01106</id>
        <label>MYC</label>
    </interactant>
    <organismsDiffer>false</organismsDiffer>
    <experiments>46</experiments>
</comment>
<comment type="interaction">
    <interactant intactId="EBI-751711">
        <id>P61244</id>
    </interactant>
    <interactant intactId="EBI-878369">
        <id>P04198</id>
        <label>MYCN</label>
    </interactant>
    <organismsDiffer>false</organismsDiffer>
    <experiments>10</experiments>
</comment>
<comment type="interaction">
    <interactant intactId="EBI-751711">
        <id>P61244</id>
    </interactant>
    <interactant intactId="EBI-742388">
        <id>Q9H8W4</id>
        <label>PLEKHF2</label>
    </interactant>
    <organismsDiffer>false</organismsDiffer>
    <experiments>4</experiments>
</comment>
<comment type="interaction">
    <interactant intactId="EBI-751711">
        <id>P61244</id>
    </interactant>
    <interactant intactId="EBI-347351">
        <id>P05549</id>
        <label>TFAP2A</label>
    </interactant>
    <organismsDiffer>false</organismsDiffer>
    <experiments>2</experiments>
</comment>
<comment type="interaction">
    <interactant intactId="EBI-751711">
        <id>P61244</id>
    </interactant>
    <interactant intactId="EBI-749713">
        <id>Q14186</id>
        <label>TFDP1</label>
    </interactant>
    <organismsDiffer>false</organismsDiffer>
    <experiments>7</experiments>
</comment>
<comment type="interaction">
    <interactant intactId="EBI-751711">
        <id>P61244</id>
    </interactant>
    <interactant intactId="EBI-1048763">
        <id>Q9H3U1</id>
        <label>UNC45A</label>
    </interactant>
    <organismsDiffer>false</organismsDiffer>
    <experiments>4</experiments>
</comment>
<comment type="interaction">
    <interactant intactId="EBI-751711">
        <id>P61244</id>
    </interactant>
    <interactant intactId="EBI-1058605">
        <id>Q8IV63</id>
        <label>VRK3</label>
    </interactant>
    <organismsDiffer>false</organismsDiffer>
    <experiments>2</experiments>
</comment>
<comment type="interaction">
    <interactant intactId="EBI-751711">
        <id>P61244</id>
    </interactant>
    <interactant intactId="EBI-947466">
        <id>P18887</id>
        <label>XRCC1</label>
    </interactant>
    <organismsDiffer>false</organismsDiffer>
    <experiments>2</experiments>
</comment>
<comment type="interaction">
    <interactant intactId="EBI-10218525">
        <id>P61244-2</id>
    </interactant>
    <interactant intactId="EBI-752241">
        <id>P50539</id>
        <label>MXI1</label>
    </interactant>
    <organismsDiffer>false</organismsDiffer>
    <experiments>3</experiments>
</comment>
<comment type="interaction">
    <interactant intactId="EBI-10218525">
        <id>P61244-2</id>
    </interactant>
    <interactant intactId="EBI-1048763">
        <id>Q9H3U1</id>
        <label>UNC45A</label>
    </interactant>
    <organismsDiffer>false</organismsDiffer>
    <experiments>3</experiments>
</comment>
<comment type="interaction">
    <interactant intactId="EBI-25848049">
        <id>P61244-4</id>
    </interactant>
    <interactant intactId="EBI-747754">
        <id>P28799</id>
        <label>GRN</label>
    </interactant>
    <organismsDiffer>false</organismsDiffer>
    <experiments>3</experiments>
</comment>
<comment type="interaction">
    <interactant intactId="EBI-25848049">
        <id>P61244-4</id>
    </interactant>
    <interactant intactId="EBI-352682">
        <id>P04792</id>
        <label>HSPB1</label>
    </interactant>
    <organismsDiffer>false</organismsDiffer>
    <experiments>3</experiments>
</comment>
<comment type="interaction">
    <interactant intactId="EBI-25848049">
        <id>P61244-4</id>
    </interactant>
    <interactant intactId="EBI-10975473">
        <id>O60333-2</id>
        <label>KIF1B</label>
    </interactant>
    <organismsDiffer>false</organismsDiffer>
    <experiments>3</experiments>
</comment>
<comment type="interaction">
    <interactant intactId="EBI-25848049">
        <id>P61244-4</id>
    </interactant>
    <interactant intactId="EBI-50433196">
        <id>A0A6Q8PF08</id>
        <label>PMP22</label>
    </interactant>
    <organismsDiffer>false</organismsDiffer>
    <experiments>3</experiments>
</comment>
<comment type="interaction">
    <interactant intactId="EBI-25848049">
        <id>P61244-4</id>
    </interactant>
    <interactant intactId="EBI-21251460">
        <id>O60260-5</id>
        <label>PRKN</label>
    </interactant>
    <organismsDiffer>false</organismsDiffer>
    <experiments>3</experiments>
</comment>
<comment type="interaction">
    <interactant intactId="EBI-25848049">
        <id>P61244-4</id>
    </interactant>
    <interactant intactId="EBI-749195">
        <id>P60891</id>
        <label>PRPS1</label>
    </interactant>
    <organismsDiffer>false</organismsDiffer>
    <experiments>3</experiments>
</comment>
<comment type="interaction">
    <interactant intactId="EBI-25848049">
        <id>P61244-4</id>
    </interactant>
    <interactant intactId="EBI-396669">
        <id>Q9Y3C5</id>
        <label>RNF11</label>
    </interactant>
    <organismsDiffer>false</organismsDiffer>
    <experiments>3</experiments>
</comment>
<comment type="interaction">
    <interactant intactId="EBI-25848049">
        <id>P61244-4</id>
    </interactant>
    <interactant intactId="EBI-720609">
        <id>O76024</id>
        <label>WFS1</label>
    </interactant>
    <organismsDiffer>false</organismsDiffer>
    <experiments>3</experiments>
</comment>
<comment type="subcellular location">
    <subcellularLocation>
        <location>Nucleus</location>
    </subcellularLocation>
    <subcellularLocation>
        <location evidence="1">Cell projection</location>
        <location evidence="1">Dendrite</location>
    </subcellularLocation>
</comment>
<comment type="alternative products">
    <event type="alternative splicing"/>
    <isoform>
        <id>P61244-1</id>
        <id>P25912-1</id>
        <name>1</name>
        <name>Long</name>
        <sequence type="displayed"/>
    </isoform>
    <isoform>
        <id>P61244-2</id>
        <id>P25912-2</id>
        <name>2</name>
        <name>Short</name>
        <sequence type="described" ref="VSP_002117"/>
    </isoform>
    <isoform>
        <id>P61244-3</id>
        <id>P25912-3</id>
        <name>3</name>
        <name>Delta-Max</name>
        <sequence type="described" ref="VSP_002118"/>
    </isoform>
    <isoform>
        <id>P61244-4</id>
        <name>4</name>
        <sequence type="described" ref="VSP_043183"/>
    </isoform>
    <isoform>
        <id>P61244-5</id>
        <name>5</name>
        <sequence type="described" ref="VSP_043430"/>
    </isoform>
    <isoform>
        <id>P61244-6</id>
        <name>6</name>
        <sequence type="described" ref="VSP_047661"/>
    </isoform>
    <text>Additional isoforms seem to exist.</text>
</comment>
<comment type="tissue specificity">
    <text>High levels found in the brain, heart and lung while lower levels are seen in the liver, kidney and skeletal muscle.</text>
</comment>
<comment type="PTM">
    <text evidence="6">Reversible lysine acetylation might regulate the nuclear-cytoplasmic shuttling of specific Max complexes.</text>
</comment>
<comment type="disease" evidence="7 8 9">
    <disease id="DI-02160">
        <name>Pheochromocytoma</name>
        <acronym>PCC</acronym>
        <description>A catecholamine-producing tumor of chromaffin tissue of the adrenal medulla or sympathetic paraganglia. The cardinal symptom, reflecting the increased secretion of epinephrine and norepinephrine, is hypertension, which may be persistent or intermittent.</description>
        <dbReference type="MIM" id="171300"/>
    </disease>
    <text>Disease susceptibility is associated with variants affecting the gene represented in this entry.</text>
</comment>
<comment type="disease" evidence="10">
    <disease id="DI-06845">
        <name>Polydactyly-macrocephaly syndrome</name>
        <acronym>PDMCS</acronym>
        <description>An autosomal dominant syndrome characterized by progressive macrocephaly and post-axial polydactyly, a condition defined by the occurrence of supernumerary digits affecting the fifth finger and/or toe. Additional variable features include ocular anomalies, global developmental delay and autistic traits.</description>
        <dbReference type="MIM" id="620712"/>
    </disease>
    <text>The disease is caused by variants affecting the gene represented in this entry.</text>
</comment>
<comment type="miscellaneous">
    <molecule>Isoform 3</molecule>
    <text evidence="15">May be produced at very low levels due to a premature stop codon in the mRNA, leading to nonsense-mediated mRNA decay.</text>
</comment>
<comment type="similarity">
    <text evidence="15">Belongs to the MAX family.</text>
</comment>
<name>MAX_HUMAN</name>
<keyword id="KW-0002">3D-structure</keyword>
<keyword id="KW-0007">Acetylation</keyword>
<keyword id="KW-0010">Activator</keyword>
<keyword id="KW-0025">Alternative splicing</keyword>
<keyword id="KW-0966">Cell projection</keyword>
<keyword id="KW-0225">Disease variant</keyword>
<keyword id="KW-0238">DNA-binding</keyword>
<keyword id="KW-0539">Nucleus</keyword>
<keyword id="KW-0597">Phosphoprotein</keyword>
<keyword id="KW-1267">Proteomics identification</keyword>
<keyword id="KW-1185">Reference proteome</keyword>
<keyword id="KW-0678">Repressor</keyword>
<keyword id="KW-0804">Transcription</keyword>
<keyword id="KW-0805">Transcription regulation</keyword>
<dbReference type="EMBL" id="M64240">
    <property type="protein sequence ID" value="AAA36200.1"/>
    <property type="molecule type" value="mRNA"/>
</dbReference>
<dbReference type="EMBL" id="M64240">
    <property type="protein sequence ID" value="AAA36201.1"/>
    <property type="molecule type" value="mRNA"/>
</dbReference>
<dbReference type="EMBL" id="X66867">
    <property type="protein sequence ID" value="CAA47337.1"/>
    <property type="molecule type" value="Genomic_DNA"/>
</dbReference>
<dbReference type="EMBL" id="X66867">
    <property type="protein sequence ID" value="CAA47338.1"/>
    <property type="molecule type" value="Genomic_DNA"/>
</dbReference>
<dbReference type="EMBL" id="X66867">
    <property type="protein sequence ID" value="CAA47339.1"/>
    <property type="molecule type" value="Genomic_DNA"/>
</dbReference>
<dbReference type="EMBL" id="X60287">
    <property type="protein sequence ID" value="CAA42827.1"/>
    <property type="molecule type" value="mRNA"/>
</dbReference>
<dbReference type="EMBL" id="AK290130">
    <property type="protein sequence ID" value="BAF82819.1"/>
    <property type="molecule type" value="mRNA"/>
</dbReference>
<dbReference type="EMBL" id="AK290929">
    <property type="protein sequence ID" value="BAF83618.1"/>
    <property type="molecule type" value="mRNA"/>
</dbReference>
<dbReference type="EMBL" id="AK292189">
    <property type="protein sequence ID" value="BAF84878.1"/>
    <property type="molecule type" value="mRNA"/>
</dbReference>
<dbReference type="EMBL" id="AK292630">
    <property type="protein sequence ID" value="BAF85319.1"/>
    <property type="molecule type" value="mRNA"/>
</dbReference>
<dbReference type="EMBL" id="AL139022">
    <property type="status" value="NOT_ANNOTATED_CDS"/>
    <property type="molecule type" value="Genomic_DNA"/>
</dbReference>
<dbReference type="EMBL" id="CH471061">
    <property type="protein sequence ID" value="EAW80899.1"/>
    <property type="molecule type" value="Genomic_DNA"/>
</dbReference>
<dbReference type="EMBL" id="CH471061">
    <property type="protein sequence ID" value="EAW80901.1"/>
    <property type="molecule type" value="Genomic_DNA"/>
</dbReference>
<dbReference type="EMBL" id="CH471061">
    <property type="protein sequence ID" value="EAW80903.1"/>
    <property type="molecule type" value="Genomic_DNA"/>
</dbReference>
<dbReference type="EMBL" id="CH471061">
    <property type="protein sequence ID" value="EAW80904.1"/>
    <property type="molecule type" value="Genomic_DNA"/>
</dbReference>
<dbReference type="EMBL" id="BC003525">
    <property type="protein sequence ID" value="AAH03525.1"/>
    <property type="molecule type" value="mRNA"/>
</dbReference>
<dbReference type="EMBL" id="BC004516">
    <property type="protein sequence ID" value="AAH04516.1"/>
    <property type="molecule type" value="mRNA"/>
</dbReference>
<dbReference type="EMBL" id="BC013669">
    <property type="protein sequence ID" value="AAH13669.1"/>
    <property type="molecule type" value="mRNA"/>
</dbReference>
<dbReference type="EMBL" id="BC027924">
    <property type="protein sequence ID" value="AAH27924.1"/>
    <property type="molecule type" value="mRNA"/>
</dbReference>
<dbReference type="CCDS" id="CCDS41965.1">
    <molecule id="P61244-3"/>
</dbReference>
<dbReference type="CCDS" id="CCDS9770.1">
    <molecule id="P61244-6"/>
</dbReference>
<dbReference type="CCDS" id="CCDS9771.1"/>
<dbReference type="CCDS" id="CCDS9772.1">
    <molecule id="P61244-2"/>
</dbReference>
<dbReference type="CCDS" id="CCDS9774.1">
    <molecule id="P61244-5"/>
</dbReference>
<dbReference type="PIR" id="A38431">
    <property type="entry name" value="A38431"/>
</dbReference>
<dbReference type="PIR" id="A42611">
    <property type="entry name" value="A42611"/>
</dbReference>
<dbReference type="PIR" id="B38431">
    <property type="entry name" value="B38431"/>
</dbReference>
<dbReference type="PIR" id="S33118">
    <property type="entry name" value="S33118"/>
</dbReference>
<dbReference type="RefSeq" id="NP_001257997.1">
    <property type="nucleotide sequence ID" value="NM_001271068.1"/>
</dbReference>
<dbReference type="RefSeq" id="NP_001394023.1">
    <molecule id="P61244-1"/>
    <property type="nucleotide sequence ID" value="NM_001407094.1"/>
</dbReference>
<dbReference type="RefSeq" id="NP_001394024.1">
    <molecule id="P61244-2"/>
    <property type="nucleotide sequence ID" value="NM_001407095.1"/>
</dbReference>
<dbReference type="RefSeq" id="NP_001394032.1">
    <molecule id="P61244-3"/>
    <property type="nucleotide sequence ID" value="NM_001407103.1"/>
</dbReference>
<dbReference type="RefSeq" id="NP_001394033.1">
    <molecule id="P61244-3"/>
    <property type="nucleotide sequence ID" value="NM_001407104.1"/>
</dbReference>
<dbReference type="RefSeq" id="NP_002373.3">
    <molecule id="P61244-1"/>
    <property type="nucleotide sequence ID" value="NM_002382.4"/>
</dbReference>
<dbReference type="RefSeq" id="NP_660087.1">
    <molecule id="P61244-2"/>
    <property type="nucleotide sequence ID" value="NM_145112.3"/>
</dbReference>
<dbReference type="RefSeq" id="NP_660088.1">
    <molecule id="P61244-3"/>
    <property type="nucleotide sequence ID" value="NM_145113.3"/>
</dbReference>
<dbReference type="RefSeq" id="NP_660089.1">
    <molecule id="P61244-5"/>
    <property type="nucleotide sequence ID" value="NM_145114.3"/>
</dbReference>
<dbReference type="RefSeq" id="NP_932061.1">
    <molecule id="P61244-6"/>
    <property type="nucleotide sequence ID" value="NM_197957.4"/>
</dbReference>
<dbReference type="PDB" id="1AN2">
    <property type="method" value="X-ray"/>
    <property type="resolution" value="2.90 A"/>
    <property type="chains" value="A=22-107"/>
</dbReference>
<dbReference type="PDB" id="1HLO">
    <property type="method" value="X-ray"/>
    <property type="resolution" value="2.80 A"/>
    <property type="chains" value="A/B=4-92"/>
</dbReference>
<dbReference type="PDB" id="1NKP">
    <property type="method" value="X-ray"/>
    <property type="resolution" value="1.80 A"/>
    <property type="chains" value="B/E=23-102"/>
</dbReference>
<dbReference type="PDB" id="1NLW">
    <property type="method" value="X-ray"/>
    <property type="resolution" value="2.00 A"/>
    <property type="chains" value="B/E=24-99"/>
</dbReference>
<dbReference type="PDB" id="1R05">
    <property type="method" value="NMR"/>
    <property type="chains" value="A/B=22-103"/>
</dbReference>
<dbReference type="PDB" id="5EYO">
    <property type="method" value="X-ray"/>
    <property type="resolution" value="2.39 A"/>
    <property type="chains" value="A/C=22-107"/>
</dbReference>
<dbReference type="PDB" id="6G6J">
    <property type="method" value="X-ray"/>
    <property type="resolution" value="2.25 A"/>
    <property type="chains" value="B/D=22-103"/>
</dbReference>
<dbReference type="PDB" id="6G6K">
    <property type="method" value="X-ray"/>
    <property type="resolution" value="1.35 A"/>
    <property type="chains" value="B/D=22-103"/>
</dbReference>
<dbReference type="PDB" id="6G6L">
    <property type="method" value="X-ray"/>
    <property type="resolution" value="2.20 A"/>
    <property type="chains" value="B/D/F/H=22-103"/>
</dbReference>
<dbReference type="PDB" id="8OTS">
    <property type="method" value="EM"/>
    <property type="resolution" value="3.30 A"/>
    <property type="chains" value="N=22-102"/>
</dbReference>
<dbReference type="PDB" id="8OTT">
    <property type="method" value="EM"/>
    <property type="resolution" value="3.30 A"/>
    <property type="chains" value="N=23-73"/>
</dbReference>
<dbReference type="PDBsum" id="1AN2"/>
<dbReference type="PDBsum" id="1HLO"/>
<dbReference type="PDBsum" id="1NKP"/>
<dbReference type="PDBsum" id="1NLW"/>
<dbReference type="PDBsum" id="1R05"/>
<dbReference type="PDBsum" id="5EYO"/>
<dbReference type="PDBsum" id="6G6J"/>
<dbReference type="PDBsum" id="6G6K"/>
<dbReference type="PDBsum" id="6G6L"/>
<dbReference type="PDBsum" id="8OTS"/>
<dbReference type="PDBsum" id="8OTT"/>
<dbReference type="BMRB" id="P61244"/>
<dbReference type="EMDB" id="EMD-17159"/>
<dbReference type="EMDB" id="EMD-17162"/>
<dbReference type="EMDB" id="EMD-17183"/>
<dbReference type="EMDB" id="EMD-17184"/>
<dbReference type="SASBDB" id="P61244"/>
<dbReference type="SMR" id="P61244"/>
<dbReference type="BioGRID" id="110319">
    <property type="interactions" value="248"/>
</dbReference>
<dbReference type="ComplexPortal" id="CPX-104">
    <property type="entry name" value="MAD-MAX transcriptional repressor complex"/>
</dbReference>
<dbReference type="ComplexPortal" id="CPX-2231">
    <property type="entry name" value="MYCN-MAX transcriptional activator complex"/>
</dbReference>
<dbReference type="ComplexPortal" id="CPX-2515">
    <property type="entry name" value="MXI1-MAX transcriptional repressor complex"/>
</dbReference>
<dbReference type="ComplexPortal" id="CPX-2517">
    <property type="entry name" value="MXD3-MAX transcriptional repressor complex"/>
</dbReference>
<dbReference type="ComplexPortal" id="CPX-2548">
    <property type="entry name" value="MYCL-MAX transcriptional activator complex"/>
</dbReference>
<dbReference type="ComplexPortal" id="CPX-2551">
    <property type="entry name" value="MGA-MAX transcriptional repressor complex"/>
</dbReference>
<dbReference type="ComplexPortal" id="CPX-7601">
    <property type="entry name" value="MXD4-MAX transcriptional repressor complex"/>
</dbReference>
<dbReference type="ComplexPortal" id="CPX-91">
    <property type="entry name" value="MYC-MAX transcriptional activator complex"/>
</dbReference>
<dbReference type="CORUM" id="P61244"/>
<dbReference type="DIP" id="DIP-28145N"/>
<dbReference type="FunCoup" id="P61244">
    <property type="interactions" value="5128"/>
</dbReference>
<dbReference type="IntAct" id="P61244">
    <property type="interactions" value="146"/>
</dbReference>
<dbReference type="MINT" id="P61244"/>
<dbReference type="STRING" id="9606.ENSP00000351490"/>
<dbReference type="BindingDB" id="P61244"/>
<dbReference type="ChEMBL" id="CHEMBL1250363"/>
<dbReference type="iPTMnet" id="P61244"/>
<dbReference type="PhosphoSitePlus" id="P61244"/>
<dbReference type="BioMuta" id="MAX"/>
<dbReference type="DMDM" id="47117704"/>
<dbReference type="jPOST" id="P61244"/>
<dbReference type="MassIVE" id="P61244"/>
<dbReference type="PaxDb" id="9606-ENSP00000351490"/>
<dbReference type="PeptideAtlas" id="P61244"/>
<dbReference type="ProteomicsDB" id="1183"/>
<dbReference type="ProteomicsDB" id="57281"/>
<dbReference type="ProteomicsDB" id="57282">
    <molecule id="P61244-2"/>
</dbReference>
<dbReference type="ProteomicsDB" id="57283">
    <molecule id="P61244-3"/>
</dbReference>
<dbReference type="ProteomicsDB" id="57284">
    <molecule id="P61244-4"/>
</dbReference>
<dbReference type="ProteomicsDB" id="57285">
    <molecule id="P61244-5"/>
</dbReference>
<dbReference type="Pumba" id="P61244"/>
<dbReference type="Antibodypedia" id="159">
    <property type="antibodies" value="559 antibodies from 38 providers"/>
</dbReference>
<dbReference type="DNASU" id="4149"/>
<dbReference type="Ensembl" id="ENST00000246163.2">
    <molecule id="P61244-5"/>
    <property type="protein sequence ID" value="ENSP00000246163.2"/>
    <property type="gene ID" value="ENSG00000125952.21"/>
</dbReference>
<dbReference type="Ensembl" id="ENST00000284165.10">
    <molecule id="P61244-4"/>
    <property type="protein sequence ID" value="ENSP00000284165.6"/>
    <property type="gene ID" value="ENSG00000125952.21"/>
</dbReference>
<dbReference type="Ensembl" id="ENST00000341653.6">
    <molecule id="P61244-6"/>
    <property type="protein sequence ID" value="ENSP00000342482.2"/>
    <property type="gene ID" value="ENSG00000125952.21"/>
</dbReference>
<dbReference type="Ensembl" id="ENST00000358402.8">
    <molecule id="P61244-2"/>
    <property type="protein sequence ID" value="ENSP00000351175.4"/>
    <property type="gene ID" value="ENSG00000125952.21"/>
</dbReference>
<dbReference type="Ensembl" id="ENST00000358664.9">
    <molecule id="P61244-1"/>
    <property type="protein sequence ID" value="ENSP00000351490.4"/>
    <property type="gene ID" value="ENSG00000125952.21"/>
</dbReference>
<dbReference type="Ensembl" id="ENST00000394606.6">
    <molecule id="P61244-3"/>
    <property type="protein sequence ID" value="ENSP00000378104.2"/>
    <property type="gene ID" value="ENSG00000125952.21"/>
</dbReference>
<dbReference type="Ensembl" id="ENST00000553928.5">
    <molecule id="P61244-3"/>
    <property type="protein sequence ID" value="ENSP00000451907.1"/>
    <property type="gene ID" value="ENSG00000125952.21"/>
</dbReference>
<dbReference type="Ensembl" id="ENST00000556979.6">
    <molecule id="P61244-3"/>
    <property type="protein sequence ID" value="ENSP00000452378.1"/>
    <property type="gene ID" value="ENSG00000125952.21"/>
</dbReference>
<dbReference type="GeneID" id="4149"/>
<dbReference type="KEGG" id="hsa:4149"/>
<dbReference type="MANE-Select" id="ENST00000358664.9">
    <property type="protein sequence ID" value="ENSP00000351490.4"/>
    <property type="RefSeq nucleotide sequence ID" value="NM_002382.5"/>
    <property type="RefSeq protein sequence ID" value="NP_002373.3"/>
</dbReference>
<dbReference type="UCSC" id="uc001xic.3">
    <property type="organism name" value="human"/>
</dbReference>
<dbReference type="AGR" id="HGNC:6913"/>
<dbReference type="CTD" id="4149"/>
<dbReference type="DisGeNET" id="4149"/>
<dbReference type="GeneCards" id="MAX"/>
<dbReference type="GeneReviews" id="MAX"/>
<dbReference type="HGNC" id="HGNC:6913">
    <property type="gene designation" value="MAX"/>
</dbReference>
<dbReference type="HPA" id="ENSG00000125952">
    <property type="expression patterns" value="Low tissue specificity"/>
</dbReference>
<dbReference type="MalaCards" id="MAX"/>
<dbReference type="MIM" id="154950">
    <property type="type" value="gene"/>
</dbReference>
<dbReference type="MIM" id="171300">
    <property type="type" value="phenotype"/>
</dbReference>
<dbReference type="MIM" id="620712">
    <property type="type" value="phenotype"/>
</dbReference>
<dbReference type="neXtProt" id="NX_P61244"/>
<dbReference type="OpenTargets" id="ENSG00000125952"/>
<dbReference type="Orphanet" id="29072">
    <property type="disease" value="Hereditary pheochromocytoma-paraganglioma"/>
</dbReference>
<dbReference type="PharmGKB" id="PA30656"/>
<dbReference type="VEuPathDB" id="HostDB:ENSG00000125952"/>
<dbReference type="eggNOG" id="KOG2483">
    <property type="taxonomic scope" value="Eukaryota"/>
</dbReference>
<dbReference type="GeneTree" id="ENSGT00530000064011"/>
<dbReference type="HOGENOM" id="CLU_2541927_0_0_1"/>
<dbReference type="InParanoid" id="P61244"/>
<dbReference type="OMA" id="YMDAHEL"/>
<dbReference type="OrthoDB" id="8964853at2759"/>
<dbReference type="PAN-GO" id="P61244">
    <property type="GO annotations" value="3 GO annotations based on evolutionary models"/>
</dbReference>
<dbReference type="PhylomeDB" id="P61244"/>
<dbReference type="TreeFam" id="TF318841"/>
<dbReference type="PathwayCommons" id="P61244"/>
<dbReference type="Reactome" id="R-HSA-1362277">
    <property type="pathway name" value="Transcription of E2F targets under negative control by DREAM complex"/>
</dbReference>
<dbReference type="Reactome" id="R-HSA-69202">
    <property type="pathway name" value="Cyclin E associated events during G1/S transition"/>
</dbReference>
<dbReference type="Reactome" id="R-HSA-69656">
    <property type="pathway name" value="Cyclin A:Cdk2-associated events at S phase entry"/>
</dbReference>
<dbReference type="Reactome" id="R-HSA-8953750">
    <property type="pathway name" value="Transcriptional Regulation by E2F6"/>
</dbReference>
<dbReference type="SignaLink" id="P61244"/>
<dbReference type="SIGNOR" id="P61244"/>
<dbReference type="BioGRID-ORCS" id="4149">
    <property type="hits" value="580 hits in 1207 CRISPR screens"/>
</dbReference>
<dbReference type="ChiTaRS" id="MAX">
    <property type="organism name" value="human"/>
</dbReference>
<dbReference type="EvolutionaryTrace" id="P61244"/>
<dbReference type="GeneWiki" id="MAX_(gene)"/>
<dbReference type="GenomeRNAi" id="4149"/>
<dbReference type="Pharos" id="P61244">
    <property type="development level" value="Tbio"/>
</dbReference>
<dbReference type="PRO" id="PR:P61244"/>
<dbReference type="Proteomes" id="UP000005640">
    <property type="component" value="Chromosome 14"/>
</dbReference>
<dbReference type="RNAct" id="P61244">
    <property type="molecule type" value="protein"/>
</dbReference>
<dbReference type="Bgee" id="ENSG00000125952">
    <property type="expression patterns" value="Expressed in monocyte and 207 other cell types or tissues"/>
</dbReference>
<dbReference type="ExpressionAtlas" id="P61244">
    <property type="expression patterns" value="baseline and differential"/>
</dbReference>
<dbReference type="GO" id="GO:0000785">
    <property type="term" value="C:chromatin"/>
    <property type="evidence" value="ECO:0000314"/>
    <property type="project" value="BHF-UCL"/>
</dbReference>
<dbReference type="GO" id="GO:0030425">
    <property type="term" value="C:dendrite"/>
    <property type="evidence" value="ECO:0007669"/>
    <property type="project" value="UniProtKB-SubCell"/>
</dbReference>
<dbReference type="GO" id="GO:0070443">
    <property type="term" value="C:Mad-Max complex"/>
    <property type="evidence" value="ECO:0000353"/>
    <property type="project" value="ComplexPortal"/>
</dbReference>
<dbReference type="GO" id="GO:0071339">
    <property type="term" value="C:MLL1 complex"/>
    <property type="evidence" value="ECO:0000314"/>
    <property type="project" value="UniProtKB"/>
</dbReference>
<dbReference type="GO" id="GO:0071943">
    <property type="term" value="C:Myc-Max complex"/>
    <property type="evidence" value="ECO:0000353"/>
    <property type="project" value="ComplexPortal"/>
</dbReference>
<dbReference type="GO" id="GO:0005654">
    <property type="term" value="C:nucleoplasm"/>
    <property type="evidence" value="ECO:0000304"/>
    <property type="project" value="Reactome"/>
</dbReference>
<dbReference type="GO" id="GO:0005634">
    <property type="term" value="C:nucleus"/>
    <property type="evidence" value="ECO:0000314"/>
    <property type="project" value="BHF-UCL"/>
</dbReference>
<dbReference type="GO" id="GO:0032993">
    <property type="term" value="C:protein-DNA complex"/>
    <property type="evidence" value="ECO:0000314"/>
    <property type="project" value="CAFA"/>
</dbReference>
<dbReference type="GO" id="GO:0090575">
    <property type="term" value="C:RNA polymerase II transcription regulator complex"/>
    <property type="evidence" value="ECO:0000314"/>
    <property type="project" value="NTNU_SB"/>
</dbReference>
<dbReference type="GO" id="GO:0003677">
    <property type="term" value="F:DNA binding"/>
    <property type="evidence" value="ECO:0000314"/>
    <property type="project" value="CAFA"/>
</dbReference>
<dbReference type="GO" id="GO:0003700">
    <property type="term" value="F:DNA-binding transcription factor activity"/>
    <property type="evidence" value="ECO:0000318"/>
    <property type="project" value="GO_Central"/>
</dbReference>
<dbReference type="GO" id="GO:0000981">
    <property type="term" value="F:DNA-binding transcription factor activity, RNA polymerase II-specific"/>
    <property type="evidence" value="ECO:0000314"/>
    <property type="project" value="GO_Central"/>
</dbReference>
<dbReference type="GO" id="GO:0140297">
    <property type="term" value="F:DNA-binding transcription factor binding"/>
    <property type="evidence" value="ECO:0000353"/>
    <property type="project" value="UniProtKB"/>
</dbReference>
<dbReference type="GO" id="GO:0001227">
    <property type="term" value="F:DNA-binding transcription repressor activity, RNA polymerase II-specific"/>
    <property type="evidence" value="ECO:0000314"/>
    <property type="project" value="UniProtKB"/>
</dbReference>
<dbReference type="GO" id="GO:0070888">
    <property type="term" value="F:E-box binding"/>
    <property type="evidence" value="ECO:0000315"/>
    <property type="project" value="CAFA"/>
</dbReference>
<dbReference type="GO" id="GO:0042802">
    <property type="term" value="F:identical protein binding"/>
    <property type="evidence" value="ECO:0000353"/>
    <property type="project" value="IntAct"/>
</dbReference>
<dbReference type="GO" id="GO:0046983">
    <property type="term" value="F:protein dimerization activity"/>
    <property type="evidence" value="ECO:0007669"/>
    <property type="project" value="InterPro"/>
</dbReference>
<dbReference type="GO" id="GO:1990837">
    <property type="term" value="F:sequence-specific double-stranded DNA binding"/>
    <property type="evidence" value="ECO:0000314"/>
    <property type="project" value="ARUK-UCL"/>
</dbReference>
<dbReference type="GO" id="GO:0000122">
    <property type="term" value="P:negative regulation of transcription by RNA polymerase II"/>
    <property type="evidence" value="ECO:0000314"/>
    <property type="project" value="NTNU_SB"/>
</dbReference>
<dbReference type="GO" id="GO:0045893">
    <property type="term" value="P:positive regulation of DNA-templated transcription"/>
    <property type="evidence" value="ECO:0000314"/>
    <property type="project" value="ComplexPortal"/>
</dbReference>
<dbReference type="GO" id="GO:0045944">
    <property type="term" value="P:positive regulation of transcription by RNA polymerase II"/>
    <property type="evidence" value="ECO:0000318"/>
    <property type="project" value="GO_Central"/>
</dbReference>
<dbReference type="GO" id="GO:0006357">
    <property type="term" value="P:regulation of transcription by RNA polymerase II"/>
    <property type="evidence" value="ECO:0000314"/>
    <property type="project" value="GO_Central"/>
</dbReference>
<dbReference type="CDD" id="cd11406">
    <property type="entry name" value="bHLHzip_Max"/>
    <property type="match status" value="1"/>
</dbReference>
<dbReference type="FunFam" id="4.10.280.10:FF:000023">
    <property type="entry name" value="MAX isoform 13"/>
    <property type="match status" value="1"/>
</dbReference>
<dbReference type="Gene3D" id="4.10.280.10">
    <property type="entry name" value="Helix-loop-helix DNA-binding domain"/>
    <property type="match status" value="1"/>
</dbReference>
<dbReference type="InterPro" id="IPR011598">
    <property type="entry name" value="bHLH_dom"/>
</dbReference>
<dbReference type="InterPro" id="IPR036638">
    <property type="entry name" value="HLH_DNA-bd_sf"/>
</dbReference>
<dbReference type="PANTHER" id="PTHR10328:SF3">
    <property type="entry name" value="PROTEIN MAX"/>
    <property type="match status" value="1"/>
</dbReference>
<dbReference type="PANTHER" id="PTHR10328">
    <property type="entry name" value="PROTEIN MAX MYC-ASSOCIATED FACTOR X"/>
    <property type="match status" value="1"/>
</dbReference>
<dbReference type="Pfam" id="PF00010">
    <property type="entry name" value="HLH"/>
    <property type="match status" value="1"/>
</dbReference>
<dbReference type="SMART" id="SM00353">
    <property type="entry name" value="HLH"/>
    <property type="match status" value="1"/>
</dbReference>
<dbReference type="SUPFAM" id="SSF47459">
    <property type="entry name" value="HLH, helix-loop-helix DNA-binding domain"/>
    <property type="match status" value="1"/>
</dbReference>
<dbReference type="PROSITE" id="PS50888">
    <property type="entry name" value="BHLH"/>
    <property type="match status" value="1"/>
</dbReference>
<proteinExistence type="evidence at protein level"/>
<sequence length="160" mass="18275">MSDNDDIEVESDEEQPRFQSAADKRAHHNALERKRRDHIKDSFHSLRDSVPSLQGEKASRAQILDKATEYIQYMRRKNHTHQQDIDDLKRQNALLEQQVRALEKARSSAQLQTNYPSSDNSLYTNAKGSTISAFDGGSDSSSESEPEEPQSRKKLRMEAS</sequence>
<evidence type="ECO:0000250" key="1"/>
<evidence type="ECO:0000255" key="2">
    <source>
        <dbReference type="PROSITE-ProRule" id="PRU00981"/>
    </source>
</evidence>
<evidence type="ECO:0000256" key="3">
    <source>
        <dbReference type="SAM" id="MobiDB-lite"/>
    </source>
</evidence>
<evidence type="ECO:0000269" key="4">
    <source>
    </source>
</evidence>
<evidence type="ECO:0000269" key="5">
    <source>
    </source>
</evidence>
<evidence type="ECO:0000269" key="6">
    <source>
    </source>
</evidence>
<evidence type="ECO:0000269" key="7">
    <source>
    </source>
</evidence>
<evidence type="ECO:0000269" key="8">
    <source>
    </source>
</evidence>
<evidence type="ECO:0000269" key="9">
    <source>
    </source>
</evidence>
<evidence type="ECO:0000269" key="10">
    <source>
    </source>
</evidence>
<evidence type="ECO:0000303" key="11">
    <source>
    </source>
</evidence>
<evidence type="ECO:0000303" key="12">
    <source>
    </source>
</evidence>
<evidence type="ECO:0000303" key="13">
    <source>
    </source>
</evidence>
<evidence type="ECO:0000303" key="14">
    <source>
    </source>
</evidence>
<evidence type="ECO:0000305" key="15"/>
<evidence type="ECO:0000305" key="16">
    <source>
    </source>
</evidence>
<evidence type="ECO:0000312" key="17">
    <source>
        <dbReference type="HGNC" id="HGNC:6913"/>
    </source>
</evidence>
<evidence type="ECO:0007744" key="18">
    <source>
    </source>
</evidence>
<evidence type="ECO:0007744" key="19">
    <source>
    </source>
</evidence>
<evidence type="ECO:0007744" key="20">
    <source>
    </source>
</evidence>
<evidence type="ECO:0007744" key="21">
    <source>
    </source>
</evidence>
<evidence type="ECO:0007744" key="22">
    <source>
    </source>
</evidence>
<evidence type="ECO:0007744" key="23">
    <source>
    </source>
</evidence>
<evidence type="ECO:0007829" key="24">
    <source>
        <dbReference type="PDB" id="1HLO"/>
    </source>
</evidence>
<evidence type="ECO:0007829" key="25">
    <source>
        <dbReference type="PDB" id="6G6K"/>
    </source>
</evidence>
<accession>P61244</accession>
<accession>A6NH73</accession>
<accession>A8K265</accession>
<accession>A8K4G4</accession>
<accession>A8K824</accession>
<accession>P25912</accession>
<accession>P52163</accession>
<accession>Q14803</accession>
<accession>Q96CY8</accession>
<reference key="1">
    <citation type="journal article" date="1991" name="Science">
        <title>Max: a helix-loop-helix zipper protein that forms a sequence-specific DNA-binding complex with Myc.</title>
        <authorList>
            <person name="Blackwood E.M."/>
            <person name="Eisenman R.N."/>
        </authorList>
    </citation>
    <scope>NUCLEOTIDE SEQUENCE [MRNA] (ISOFORMS 1 AND 2)</scope>
</reference>
<reference key="2">
    <citation type="journal article" date="1993" name="Oncogene">
        <title>Alternative mRNA forms and open reading frames of the max gene.</title>
        <authorList>
            <person name="Vaestrik I."/>
            <person name="Koskinen P.J."/>
            <person name="Alitalo R."/>
            <person name="Maekelae T.P."/>
        </authorList>
    </citation>
    <scope>NUCLEOTIDE SEQUENCE [GENOMIC DNA]</scope>
</reference>
<reference key="3">
    <citation type="journal article" date="1992" name="Science">
        <title>Alternative forms of Max as enhancers or suppressors of Myc-ras cotransformation.</title>
        <authorList>
            <person name="Maekelae T.P."/>
            <person name="Koskinen P.J."/>
            <person name="Vaestrik I."/>
            <person name="Alitalo K."/>
        </authorList>
    </citation>
    <scope>NUCLEOTIDE SEQUENCE [MRNA] (ISOFORM 3)</scope>
</reference>
<reference key="4">
    <citation type="journal article" date="2004" name="Nat. Genet.">
        <title>Complete sequencing and characterization of 21,243 full-length human cDNAs.</title>
        <authorList>
            <person name="Ota T."/>
            <person name="Suzuki Y."/>
            <person name="Nishikawa T."/>
            <person name="Otsuki T."/>
            <person name="Sugiyama T."/>
            <person name="Irie R."/>
            <person name="Wakamatsu A."/>
            <person name="Hayashi K."/>
            <person name="Sato H."/>
            <person name="Nagai K."/>
            <person name="Kimura K."/>
            <person name="Makita H."/>
            <person name="Sekine M."/>
            <person name="Obayashi M."/>
            <person name="Nishi T."/>
            <person name="Shibahara T."/>
            <person name="Tanaka T."/>
            <person name="Ishii S."/>
            <person name="Yamamoto J."/>
            <person name="Saito K."/>
            <person name="Kawai Y."/>
            <person name="Isono Y."/>
            <person name="Nakamura Y."/>
            <person name="Nagahari K."/>
            <person name="Murakami K."/>
            <person name="Yasuda T."/>
            <person name="Iwayanagi T."/>
            <person name="Wagatsuma M."/>
            <person name="Shiratori A."/>
            <person name="Sudo H."/>
            <person name="Hosoiri T."/>
            <person name="Kaku Y."/>
            <person name="Kodaira H."/>
            <person name="Kondo H."/>
            <person name="Sugawara M."/>
            <person name="Takahashi M."/>
            <person name="Kanda K."/>
            <person name="Yokoi T."/>
            <person name="Furuya T."/>
            <person name="Kikkawa E."/>
            <person name="Omura Y."/>
            <person name="Abe K."/>
            <person name="Kamihara K."/>
            <person name="Katsuta N."/>
            <person name="Sato K."/>
            <person name="Tanikawa M."/>
            <person name="Yamazaki M."/>
            <person name="Ninomiya K."/>
            <person name="Ishibashi T."/>
            <person name="Yamashita H."/>
            <person name="Murakawa K."/>
            <person name="Fujimori K."/>
            <person name="Tanai H."/>
            <person name="Kimata M."/>
            <person name="Watanabe M."/>
            <person name="Hiraoka S."/>
            <person name="Chiba Y."/>
            <person name="Ishida S."/>
            <person name="Ono Y."/>
            <person name="Takiguchi S."/>
            <person name="Watanabe S."/>
            <person name="Yosida M."/>
            <person name="Hotuta T."/>
            <person name="Kusano J."/>
            <person name="Kanehori K."/>
            <person name="Takahashi-Fujii A."/>
            <person name="Hara H."/>
            <person name="Tanase T.-O."/>
            <person name="Nomura Y."/>
            <person name="Togiya S."/>
            <person name="Komai F."/>
            <person name="Hara R."/>
            <person name="Takeuchi K."/>
            <person name="Arita M."/>
            <person name="Imose N."/>
            <person name="Musashino K."/>
            <person name="Yuuki H."/>
            <person name="Oshima A."/>
            <person name="Sasaki N."/>
            <person name="Aotsuka S."/>
            <person name="Yoshikawa Y."/>
            <person name="Matsunawa H."/>
            <person name="Ichihara T."/>
            <person name="Shiohata N."/>
            <person name="Sano S."/>
            <person name="Moriya S."/>
            <person name="Momiyama H."/>
            <person name="Satoh N."/>
            <person name="Takami S."/>
            <person name="Terashima Y."/>
            <person name="Suzuki O."/>
            <person name="Nakagawa S."/>
            <person name="Senoh A."/>
            <person name="Mizoguchi H."/>
            <person name="Goto Y."/>
            <person name="Shimizu F."/>
            <person name="Wakebe H."/>
            <person name="Hishigaki H."/>
            <person name="Watanabe T."/>
            <person name="Sugiyama A."/>
            <person name="Takemoto M."/>
            <person name="Kawakami B."/>
            <person name="Yamazaki M."/>
            <person name="Watanabe K."/>
            <person name="Kumagai A."/>
            <person name="Itakura S."/>
            <person name="Fukuzumi Y."/>
            <person name="Fujimori Y."/>
            <person name="Komiyama M."/>
            <person name="Tashiro H."/>
            <person name="Tanigami A."/>
            <person name="Fujiwara T."/>
            <person name="Ono T."/>
            <person name="Yamada K."/>
            <person name="Fujii Y."/>
            <person name="Ozaki K."/>
            <person name="Hirao M."/>
            <person name="Ohmori Y."/>
            <person name="Kawabata A."/>
            <person name="Hikiji T."/>
            <person name="Kobatake N."/>
            <person name="Inagaki H."/>
            <person name="Ikema Y."/>
            <person name="Okamoto S."/>
            <person name="Okitani R."/>
            <person name="Kawakami T."/>
            <person name="Noguchi S."/>
            <person name="Itoh T."/>
            <person name="Shigeta K."/>
            <person name="Senba T."/>
            <person name="Matsumura K."/>
            <person name="Nakajima Y."/>
            <person name="Mizuno T."/>
            <person name="Morinaga M."/>
            <person name="Sasaki M."/>
            <person name="Togashi T."/>
            <person name="Oyama M."/>
            <person name="Hata H."/>
            <person name="Watanabe M."/>
            <person name="Komatsu T."/>
            <person name="Mizushima-Sugano J."/>
            <person name="Satoh T."/>
            <person name="Shirai Y."/>
            <person name="Takahashi Y."/>
            <person name="Nakagawa K."/>
            <person name="Okumura K."/>
            <person name="Nagase T."/>
            <person name="Nomura N."/>
            <person name="Kikuchi H."/>
            <person name="Masuho Y."/>
            <person name="Yamashita R."/>
            <person name="Nakai K."/>
            <person name="Yada T."/>
            <person name="Nakamura Y."/>
            <person name="Ohara O."/>
            <person name="Isogai T."/>
            <person name="Sugano S."/>
        </authorList>
    </citation>
    <scope>NUCLEOTIDE SEQUENCE [LARGE SCALE MRNA] (ISOFORMS 1; 2; 3 AND 4)</scope>
    <source>
        <tissue>Mammary gland</tissue>
        <tissue>Thalamus</tissue>
        <tissue>Thymus</tissue>
    </source>
</reference>
<reference key="5">
    <citation type="journal article" date="2003" name="Nature">
        <title>The DNA sequence and analysis of human chromosome 14.</title>
        <authorList>
            <person name="Heilig R."/>
            <person name="Eckenberg R."/>
            <person name="Petit J.-L."/>
            <person name="Fonknechten N."/>
            <person name="Da Silva C."/>
            <person name="Cattolico L."/>
            <person name="Levy M."/>
            <person name="Barbe V."/>
            <person name="De Berardinis V."/>
            <person name="Ureta-Vidal A."/>
            <person name="Pelletier E."/>
            <person name="Vico V."/>
            <person name="Anthouard V."/>
            <person name="Rowen L."/>
            <person name="Madan A."/>
            <person name="Qin S."/>
            <person name="Sun H."/>
            <person name="Du H."/>
            <person name="Pepin K."/>
            <person name="Artiguenave F."/>
            <person name="Robert C."/>
            <person name="Cruaud C."/>
            <person name="Bruels T."/>
            <person name="Jaillon O."/>
            <person name="Friedlander L."/>
            <person name="Samson G."/>
            <person name="Brottier P."/>
            <person name="Cure S."/>
            <person name="Segurens B."/>
            <person name="Aniere F."/>
            <person name="Samain S."/>
            <person name="Crespeau H."/>
            <person name="Abbasi N."/>
            <person name="Aiach N."/>
            <person name="Boscus D."/>
            <person name="Dickhoff R."/>
            <person name="Dors M."/>
            <person name="Dubois I."/>
            <person name="Friedman C."/>
            <person name="Gouyvenoux M."/>
            <person name="James R."/>
            <person name="Madan A."/>
            <person name="Mairey-Estrada B."/>
            <person name="Mangenot S."/>
            <person name="Martins N."/>
            <person name="Menard M."/>
            <person name="Oztas S."/>
            <person name="Ratcliffe A."/>
            <person name="Shaffer T."/>
            <person name="Trask B."/>
            <person name="Vacherie B."/>
            <person name="Bellemere C."/>
            <person name="Belser C."/>
            <person name="Besnard-Gonnet M."/>
            <person name="Bartol-Mavel D."/>
            <person name="Boutard M."/>
            <person name="Briez-Silla S."/>
            <person name="Combette S."/>
            <person name="Dufosse-Laurent V."/>
            <person name="Ferron C."/>
            <person name="Lechaplais C."/>
            <person name="Louesse C."/>
            <person name="Muselet D."/>
            <person name="Magdelenat G."/>
            <person name="Pateau E."/>
            <person name="Petit E."/>
            <person name="Sirvain-Trukniewicz P."/>
            <person name="Trybou A."/>
            <person name="Vega-Czarny N."/>
            <person name="Bataille E."/>
            <person name="Bluet E."/>
            <person name="Bordelais I."/>
            <person name="Dubois M."/>
            <person name="Dumont C."/>
            <person name="Guerin T."/>
            <person name="Haffray S."/>
            <person name="Hammadi R."/>
            <person name="Muanga J."/>
            <person name="Pellouin V."/>
            <person name="Robert D."/>
            <person name="Wunderle E."/>
            <person name="Gauguet G."/>
            <person name="Roy A."/>
            <person name="Sainte-Marthe L."/>
            <person name="Verdier J."/>
            <person name="Verdier-Discala C."/>
            <person name="Hillier L.W."/>
            <person name="Fulton L."/>
            <person name="McPherson J."/>
            <person name="Matsuda F."/>
            <person name="Wilson R."/>
            <person name="Scarpelli C."/>
            <person name="Gyapay G."/>
            <person name="Wincker P."/>
            <person name="Saurin W."/>
            <person name="Quetier F."/>
            <person name="Waterston R."/>
            <person name="Hood L."/>
            <person name="Weissenbach J."/>
        </authorList>
    </citation>
    <scope>NUCLEOTIDE SEQUENCE [LARGE SCALE GENOMIC DNA]</scope>
</reference>
<reference key="6">
    <citation type="submission" date="2005-07" db="EMBL/GenBank/DDBJ databases">
        <authorList>
            <person name="Mural R.J."/>
            <person name="Istrail S."/>
            <person name="Sutton G.G."/>
            <person name="Florea L."/>
            <person name="Halpern A.L."/>
            <person name="Mobarry C.M."/>
            <person name="Lippert R."/>
            <person name="Walenz B."/>
            <person name="Shatkay H."/>
            <person name="Dew I."/>
            <person name="Miller J.R."/>
            <person name="Flanigan M.J."/>
            <person name="Edwards N.J."/>
            <person name="Bolanos R."/>
            <person name="Fasulo D."/>
            <person name="Halldorsson B.V."/>
            <person name="Hannenhalli S."/>
            <person name="Turner R."/>
            <person name="Yooseph S."/>
            <person name="Lu F."/>
            <person name="Nusskern D.R."/>
            <person name="Shue B.C."/>
            <person name="Zheng X.H."/>
            <person name="Zhong F."/>
            <person name="Delcher A.L."/>
            <person name="Huson D.H."/>
            <person name="Kravitz S.A."/>
            <person name="Mouchard L."/>
            <person name="Reinert K."/>
            <person name="Remington K.A."/>
            <person name="Clark A.G."/>
            <person name="Waterman M.S."/>
            <person name="Eichler E.E."/>
            <person name="Adams M.D."/>
            <person name="Hunkapiller M.W."/>
            <person name="Myers E.W."/>
            <person name="Venter J.C."/>
        </authorList>
    </citation>
    <scope>NUCLEOTIDE SEQUENCE [LARGE SCALE GENOMIC DNA]</scope>
</reference>
<reference key="7">
    <citation type="journal article" date="2004" name="Genome Res.">
        <title>The status, quality, and expansion of the NIH full-length cDNA project: the Mammalian Gene Collection (MGC).</title>
        <authorList>
            <consortium name="The MGC Project Team"/>
        </authorList>
    </citation>
    <scope>NUCLEOTIDE SEQUENCE [LARGE SCALE MRNA] (ISOFORMS 1; 2 AND 5)</scope>
    <source>
        <tissue>Brain</tissue>
        <tissue>Lung</tissue>
        <tissue>Uterus</tissue>
    </source>
</reference>
<reference key="8">
    <citation type="journal article" date="2002" name="Science">
        <title>A complex with chromatin modifiers that occupies E2F- and Myc-responsive genes in G0 cells.</title>
        <authorList>
            <person name="Ogawa H."/>
            <person name="Ishiguro K."/>
            <person name="Gaubatz S."/>
            <person name="Livingston D.M."/>
            <person name="Nakatani Y."/>
        </authorList>
    </citation>
    <scope>IDENTIFICATION IN COMPLEX WITH E2F6; TFDP1; MGA; EUHMTASE1; BAT8; CBX3; RING1; RNF2; MBLR; L3MBTL2 AND YAF2</scope>
</reference>
<reference key="9">
    <citation type="journal article" date="2004" name="Genome Biol.">
        <title>An unappreciated role for RNA surveillance.</title>
        <authorList>
            <person name="Hillman R.T."/>
            <person name="Green R.E."/>
            <person name="Brenner S.E."/>
        </authorList>
    </citation>
    <scope>SPLICE ISOFORM(S) THAT ARE POTENTIAL NMD TARGET(S)</scope>
</reference>
<reference key="10">
    <citation type="journal article" date="2005" name="Cell">
        <title>Physical association and coordinate function of the H3 K4 methyltransferase MLL1 and the H4 K16 acetyltransferase MOF.</title>
        <authorList>
            <person name="Dou Y."/>
            <person name="Milne T.A."/>
            <person name="Tackett A.J."/>
            <person name="Smith E.R."/>
            <person name="Fukuda A."/>
            <person name="Wysocka J."/>
            <person name="Allis C.D."/>
            <person name="Chait B.T."/>
            <person name="Hess J.L."/>
            <person name="Roeder R.G."/>
        </authorList>
    </citation>
    <scope>IDENTIFICATION IN THE MLL1/MLL COMPLEX</scope>
</reference>
<reference key="11">
    <citation type="journal article" date="2005" name="Nat. Biotechnol.">
        <title>Immunoaffinity profiling of tyrosine phosphorylation in cancer cells.</title>
        <authorList>
            <person name="Rush J."/>
            <person name="Moritz A."/>
            <person name="Lee K.A."/>
            <person name="Guo A."/>
            <person name="Goss V.L."/>
            <person name="Spek E.J."/>
            <person name="Zhang H."/>
            <person name="Zha X.-M."/>
            <person name="Polakiewicz R.D."/>
            <person name="Comb M.J."/>
        </authorList>
    </citation>
    <scope>IDENTIFICATION BY MASS SPECTROMETRY [LARGE SCALE ANALYSIS]</scope>
</reference>
<reference key="12">
    <citation type="journal article" date="2006" name="Cell">
        <title>Global, in vivo, and site-specific phosphorylation dynamics in signaling networks.</title>
        <authorList>
            <person name="Olsen J.V."/>
            <person name="Blagoev B."/>
            <person name="Gnad F."/>
            <person name="Macek B."/>
            <person name="Kumar C."/>
            <person name="Mortensen P."/>
            <person name="Mann M."/>
        </authorList>
    </citation>
    <scope>PHOSPHORYLATION [LARGE SCALE ANALYSIS] AT SER-2 AND SER-11</scope>
    <scope>PHOSPHORYLATION [LARGE SCALE ANALYSIS] AT SER-2 (ISOFORM 2)</scope>
    <scope>IDENTIFICATION BY MASS SPECTROMETRY [LARGE SCALE ANALYSIS]</scope>
    <source>
        <tissue>Cervix carcinoma</tissue>
    </source>
</reference>
<reference key="13">
    <citation type="journal article" date="2007" name="Biochem. J.">
        <title>Max is acetylated by p300 at several nuclear localization residues.</title>
        <authorList>
            <person name="Faiola F."/>
            <person name="Wu Y.-T."/>
            <person name="Pan S."/>
            <person name="Zhang K."/>
            <person name="Farina A."/>
            <person name="Martinez E."/>
        </authorList>
    </citation>
    <scope>ACETYLATION AT LYS-66; LYS-153 AND LYS-154</scope>
    <scope>MUTAGENESIS OF LYS-66; LYS-153 AND LYS-154</scope>
</reference>
<reference key="14">
    <citation type="journal article" date="2008" name="Mol. Cell">
        <title>Kinase-selective enrichment enables quantitative phosphoproteomics of the kinome across the cell cycle.</title>
        <authorList>
            <person name="Daub H."/>
            <person name="Olsen J.V."/>
            <person name="Bairlein M."/>
            <person name="Gnad F."/>
            <person name="Oppermann F.S."/>
            <person name="Korner R."/>
            <person name="Greff Z."/>
            <person name="Keri G."/>
            <person name="Stemmann O."/>
            <person name="Mann M."/>
        </authorList>
    </citation>
    <scope>PHOSPHORYLATION [LARGE SCALE ANALYSIS] AT SER-2 (ISOFORM 2)</scope>
    <scope>IDENTIFICATION BY MASS SPECTROMETRY [LARGE SCALE ANALYSIS]</scope>
    <source>
        <tissue>Cervix carcinoma</tissue>
    </source>
</reference>
<reference key="15">
    <citation type="journal article" date="2009" name="Anal. Chem.">
        <title>Lys-N and trypsin cover complementary parts of the phosphoproteome in a refined SCX-based approach.</title>
        <authorList>
            <person name="Gauci S."/>
            <person name="Helbig A.O."/>
            <person name="Slijper M."/>
            <person name="Krijgsveld J."/>
            <person name="Heck A.J."/>
            <person name="Mohammed S."/>
        </authorList>
    </citation>
    <scope>ACETYLATION [LARGE SCALE ANALYSIS] AT SER-2</scope>
    <scope>CLEAVAGE OF INITIATOR METHIONINE [LARGE SCALE ANALYSIS]</scope>
    <scope>IDENTIFICATION BY MASS SPECTROMETRY [LARGE SCALE ANALYSIS]</scope>
</reference>
<reference key="16">
    <citation type="journal article" date="2010" name="Sci. Signal.">
        <title>Quantitative phosphoproteomics reveals widespread full phosphorylation site occupancy during mitosis.</title>
        <authorList>
            <person name="Olsen J.V."/>
            <person name="Vermeulen M."/>
            <person name="Santamaria A."/>
            <person name="Kumar C."/>
            <person name="Miller M.L."/>
            <person name="Jensen L.J."/>
            <person name="Gnad F."/>
            <person name="Cox J."/>
            <person name="Jensen T.S."/>
            <person name="Nigg E.A."/>
            <person name="Brunak S."/>
            <person name="Mann M."/>
        </authorList>
    </citation>
    <scope>ACETYLATION [LARGE SCALE ANALYSIS] AT SER-2</scope>
    <scope>ACETYLATION [LARGE SCALE ANALYSIS] AT SER-2 (ISOFORM 2)</scope>
    <scope>PHOSPHORYLATION [LARGE SCALE ANALYSIS] AT SER-2 AND SER-11</scope>
    <scope>PHOSPHORYLATION [LARGE SCALE ANALYSIS] AT SER-2 AND SER-11 (ISOFORM 2)</scope>
    <scope>CLEAVAGE OF INITIATOR METHIONINE [LARGE SCALE ANALYSIS]</scope>
    <scope>CLEAVAGE OF INITIATOR METHIONINE [LARGE SCALE ANALYSIS] (ISOFORM 2)</scope>
    <scope>IDENTIFICATION BY MASS SPECTROMETRY [LARGE SCALE ANALYSIS]</scope>
    <source>
        <tissue>Cervix carcinoma</tissue>
    </source>
</reference>
<reference key="17">
    <citation type="journal article" date="2011" name="BMC Syst. Biol.">
        <title>Initial characterization of the human central proteome.</title>
        <authorList>
            <person name="Burkard T.R."/>
            <person name="Planyavsky M."/>
            <person name="Kaupe I."/>
            <person name="Breitwieser F.P."/>
            <person name="Buerckstuemmer T."/>
            <person name="Bennett K.L."/>
            <person name="Superti-Furga G."/>
            <person name="Colinge J."/>
        </authorList>
    </citation>
    <scope>IDENTIFICATION BY MASS SPECTROMETRY [LARGE SCALE ANALYSIS]</scope>
</reference>
<reference key="18">
    <citation type="journal article" date="2011" name="Nat. Genet.">
        <title>Exome sequencing identifies MAX mutations as a cause of hereditary pheochromocytoma.</title>
        <authorList>
            <person name="Comino-Mendez I."/>
            <person name="Gracia-Aznarez F.J."/>
            <person name="Schiavi F."/>
            <person name="Landa I."/>
            <person name="Leandro-Garcia L.J."/>
            <person name="Leton R."/>
            <person name="Honrado E."/>
            <person name="Ramos-Medina R."/>
            <person name="Caronia D."/>
            <person name="Pita G."/>
            <person name="Gomez-Grana A."/>
            <person name="de Cubas A.A."/>
            <person name="Inglada-Perez L."/>
            <person name="Maliszewska A."/>
            <person name="Taschin E."/>
            <person name="Bobisse S."/>
            <person name="Pica G."/>
            <person name="Loli P."/>
            <person name="Hernandez-Lavado R."/>
            <person name="Diaz J.A."/>
            <person name="Gomez-Morales M."/>
            <person name="Gonzalez-Neira A."/>
            <person name="Roncador G."/>
            <person name="Rodriguez-Antona C."/>
            <person name="Benitez J."/>
            <person name="Mannelli M."/>
            <person name="Opocher G."/>
            <person name="Robledo M."/>
            <person name="Cascon A."/>
        </authorList>
    </citation>
    <scope>INVOLVEMENT IN PCC</scope>
    <scope>VARIANTS PCC ASN-23; 33-ARG--SER-160 DEL; 75-ARG--SER-160 DEL AND PRO-94</scope>
    <scope>VARIANT LEU-142</scope>
</reference>
<reference key="19">
    <citation type="journal article" date="2011" name="Sci. Signal.">
        <title>System-wide temporal characterization of the proteome and phosphoproteome of human embryonic stem cell differentiation.</title>
        <authorList>
            <person name="Rigbolt K.T."/>
            <person name="Prokhorova T.A."/>
            <person name="Akimov V."/>
            <person name="Henningsen J."/>
            <person name="Johansen P.T."/>
            <person name="Kratchmarova I."/>
            <person name="Kassem M."/>
            <person name="Mann M."/>
            <person name="Olsen J.V."/>
            <person name="Blagoev B."/>
        </authorList>
    </citation>
    <scope>ACETYLATION [LARGE SCALE ANALYSIS] AT SER-2</scope>
    <scope>ACETYLATION [LARGE SCALE ANALYSIS] AT SER-2 (ISOFORM 2)</scope>
    <scope>PHOSPHORYLATION [LARGE SCALE ANALYSIS] AT SER-2 AND SER-11</scope>
    <scope>PHOSPHORYLATION [LARGE SCALE ANALYSIS] AT SER-2 (ISOFORM 2)</scope>
    <scope>CLEAVAGE OF INITIATOR METHIONINE [LARGE SCALE ANALYSIS]</scope>
    <scope>CLEAVAGE OF INITIATOR METHIONINE [LARGE SCALE ANALYSIS] (ISOFORM 2)</scope>
    <scope>IDENTIFICATION BY MASS SPECTROMETRY [LARGE SCALE ANALYSIS]</scope>
</reference>
<reference key="20">
    <citation type="journal article" date="2013" name="J. Proteome Res.">
        <title>Toward a comprehensive characterization of a human cancer cell phosphoproteome.</title>
        <authorList>
            <person name="Zhou H."/>
            <person name="Di Palma S."/>
            <person name="Preisinger C."/>
            <person name="Peng M."/>
            <person name="Polat A.N."/>
            <person name="Heck A.J."/>
            <person name="Mohammed S."/>
        </authorList>
    </citation>
    <scope>PHOSPHORYLATION [LARGE SCALE ANALYSIS] AT SER-107</scope>
    <scope>IDENTIFICATION BY MASS SPECTROMETRY [LARGE SCALE ANALYSIS]</scope>
    <source>
        <tissue>Erythroleukemia</tissue>
    </source>
</reference>
<reference key="21">
    <citation type="journal article" date="2012" name="Clin. Cancer Res.">
        <title>MAX mutations cause hereditary and sporadic pheochromocytoma and paraganglioma.</title>
        <authorList>
            <person name="Burnichon N."/>
            <person name="Cascon A."/>
            <person name="Schiavi F."/>
            <person name="Morales N.P."/>
            <person name="Comino-Mendez I."/>
            <person name="Abermil N."/>
            <person name="Inglada-Perez L."/>
            <person name="de Cubas A.A."/>
            <person name="Amar L."/>
            <person name="Barontini M."/>
            <person name="de Quiros S.B."/>
            <person name="Bertherat J."/>
            <person name="Bignon Y.J."/>
            <person name="Blok M.J."/>
            <person name="Bobisse S."/>
            <person name="Borrego S."/>
            <person name="Castellano M."/>
            <person name="Chanson P."/>
            <person name="Chiara M.D."/>
            <person name="Corssmit E.P."/>
            <person name="Giacche M."/>
            <person name="de Krijger R.R."/>
            <person name="Ercolino T."/>
            <person name="Girerd X."/>
            <person name="Gomez-Garcia E.B."/>
            <person name="Gomez-Grana A."/>
            <person name="Guilhem I."/>
            <person name="Hes F.J."/>
            <person name="Honrado E."/>
            <person name="Korpershoek E."/>
            <person name="Lenders J.W."/>
            <person name="Leton R."/>
            <person name="Mensenkamp A.R."/>
            <person name="Merlo A."/>
            <person name="Mori L."/>
            <person name="Murat A."/>
            <person name="Pierre P."/>
            <person name="Plouin P.F."/>
            <person name="Prodanov T."/>
            <person name="Quesada-Charneco M."/>
            <person name="Qin N."/>
            <person name="Rapizzi E."/>
            <person name="Raymond V."/>
            <person name="Reisch N."/>
            <person name="Roncador G."/>
            <person name="Ruiz-Ferrer M."/>
            <person name="Schillo F."/>
            <person name="Stegmann A.P."/>
            <person name="Suarez C."/>
            <person name="Taschin E."/>
            <person name="Timmers H.J."/>
            <person name="Tops C.M."/>
            <person name="Urioste M."/>
            <person name="Beuschlein F."/>
            <person name="Pacak K."/>
            <person name="Mannelli M."/>
            <person name="Dahia P.L."/>
            <person name="Opocher G."/>
            <person name="Eisenhofer G."/>
            <person name="Gimenez-Roqueplo A.P."/>
            <person name="Robledo M."/>
        </authorList>
    </citation>
    <scope>VARIANTS PCC LEU-9; TRP-25; 33-ARG--SER-160 DEL; CYS-35; 47-ARG--SER-52 DEL; TRP-60; SER-71; VAL-74; 75-ARG--SER-160 DEL; 82-GLN--SER-160 DEL; PRO-90 AND PRO-102</scope>
</reference>
<reference key="22">
    <citation type="journal article" date="2015" name="J. Mol. Med.">
        <title>Functional and in silico assessment of MAX variants of unknown significance.</title>
        <authorList>
            <person name="Comino-Mendez I."/>
            <person name="Leandro-Garcia L.J."/>
            <person name="Montoya G."/>
            <person name="Inglada-Perez L."/>
            <person name="de Cubas A.A."/>
            <person name="Curras-Freixes M."/>
            <person name="Tysoe C."/>
            <person name="Izatt L."/>
            <person name="Leton R."/>
            <person name="Gomez-Grana A."/>
            <person name="Mancikova V."/>
            <person name="Apellaniz-Ruiz M."/>
            <person name="Mannelli M."/>
            <person name="Schiavi F."/>
            <person name="Favier J."/>
            <person name="Gimenez-Roqueplo A.P."/>
            <person name="Timmers H.J."/>
            <person name="Roncador G."/>
            <person name="Garcia J.F."/>
            <person name="Rodriguez-Antona C."/>
            <person name="Robledo M."/>
            <person name="Cascon A."/>
        </authorList>
    </citation>
    <scope>VARIANTS PCC LEU-9; ASN-23; TRP-25; 33-ARG--SER-160 DEL; CYS-35; TRP-60; SER-71; VAL-74; PRO-90; PRO-94; PRO-102 AND PRO-102</scope>
    <scope>CHARACTERIZATION OF VARIANTS PCC LEU-9; ASN-23; TRP-25; 33-ARG--SER-160 DEL; CYS-35; TRP-60; SER-71; VAL-74; PRO-90; PRO-94 AND PRO-102</scope>
    <scope>FUNCTION</scope>
    <scope>VARIANTS THR-114 AND LEU-142</scope>
    <scope>CHARACTERIZATION OF VARIANTS THR-114 AND LEU-142</scope>
</reference>
<reference key="23">
    <citation type="journal article" date="1993" name="Nature">
        <title>Recognition by Max of its cognate DNA through a dimeric b/HLH/Z domain.</title>
        <authorList>
            <person name="Ferre-D'Amare A.R."/>
            <person name="Prendergast G.C."/>
            <person name="Ziff E.B."/>
            <person name="Burley S.K."/>
        </authorList>
    </citation>
    <scope>X-RAY CRYSTALLOGRAPHY (2.9 ANGSTROMS) OF 22-107</scope>
</reference>
<reference key="24">
    <citation type="journal article" date="1997" name="Structure">
        <title>The crystal structure of an intact human Max-DNA complex: new insights into mechanisms of transcriptional control.</title>
        <authorList>
            <person name="Brownlie P."/>
            <person name="Ceska T."/>
            <person name="Lamers M."/>
            <person name="Romier C."/>
            <person name="Stier G."/>
            <person name="Teo H."/>
            <person name="Suck D."/>
        </authorList>
    </citation>
    <scope>X-RAY CRYSTALLOGRAPHY (2.8 ANGSTROMS)</scope>
</reference>
<reference key="25">
    <citation type="journal article" date="2024" name="Am. J. Hum. Genet.">
        <title>A recurrent de novo MAX p.Arg60Gln variant causes a syndromic overgrowth disorder through differential expression of c-Myc target genes.</title>
        <authorList>
            <person name="Harris E.L."/>
            <person name="Roy V."/>
            <person name="Montagne M."/>
            <person name="Rose A.M.S."/>
            <person name="Livesey H."/>
            <person name="Reijnders M.R.F."/>
            <person name="Hobson E."/>
            <person name="Sansbury F.H."/>
            <person name="Willemsen M.H."/>
            <person name="Pfundt R."/>
            <person name="Warren D."/>
            <person name="Long V."/>
            <person name="Carr I.M."/>
            <person name="Brunner H.G."/>
            <person name="Sheridan E.G."/>
            <person name="Firth H.V."/>
            <person name="Lavigne P."/>
            <person name="Poulter J.A."/>
        </authorList>
    </citation>
    <scope>VARIANT PDMCS GLN-60</scope>
    <scope>CHARACTERIZATION OF VARIANT PDMCS GLN-60</scope>
    <scope>INVOLVEMENT IN PDMCS</scope>
</reference>
<gene>
    <name evidence="17" type="primary">MAX</name>
    <name type="synonym">BHLHD4</name>
</gene>
<protein>
    <recommendedName>
        <fullName evidence="15">Protein max</fullName>
    </recommendedName>
    <alternativeName>
        <fullName>Class D basic helix-loop-helix protein 4</fullName>
        <shortName>bHLHd4</shortName>
    </alternativeName>
    <alternativeName>
        <fullName evidence="17">Myc-associated factor X</fullName>
    </alternativeName>
</protein>